<keyword id="KW-0028">Amino-acid biosynthesis</keyword>
<keyword id="KW-0100">Branched-chain amino acid biosynthesis</keyword>
<keyword id="KW-0432">Leucine biosynthesis</keyword>
<keyword id="KW-0456">Lyase</keyword>
<protein>
    <recommendedName>
        <fullName evidence="1">3-isopropylmalate dehydratase small subunit</fullName>
        <ecNumber evidence="1">4.2.1.33</ecNumber>
    </recommendedName>
    <alternativeName>
        <fullName evidence="1">Alpha-IPM isomerase</fullName>
        <shortName evidence="1">IPMI</shortName>
    </alternativeName>
    <alternativeName>
        <fullName evidence="1">Isopropylmalate isomerase</fullName>
    </alternativeName>
</protein>
<name>LEUD_CUPPJ</name>
<dbReference type="EC" id="4.2.1.33" evidence="1"/>
<dbReference type="EMBL" id="CP000090">
    <property type="protein sequence ID" value="AAZ61674.1"/>
    <property type="molecule type" value="Genomic_DNA"/>
</dbReference>
<dbReference type="SMR" id="Q46YV9"/>
<dbReference type="STRING" id="264198.Reut_A2312"/>
<dbReference type="KEGG" id="reu:Reut_A2312"/>
<dbReference type="eggNOG" id="COG0066">
    <property type="taxonomic scope" value="Bacteria"/>
</dbReference>
<dbReference type="HOGENOM" id="CLU_081378_0_3_4"/>
<dbReference type="OrthoDB" id="9777465at2"/>
<dbReference type="UniPathway" id="UPA00048">
    <property type="reaction ID" value="UER00071"/>
</dbReference>
<dbReference type="GO" id="GO:0009316">
    <property type="term" value="C:3-isopropylmalate dehydratase complex"/>
    <property type="evidence" value="ECO:0007669"/>
    <property type="project" value="InterPro"/>
</dbReference>
<dbReference type="GO" id="GO:0003861">
    <property type="term" value="F:3-isopropylmalate dehydratase activity"/>
    <property type="evidence" value="ECO:0007669"/>
    <property type="project" value="UniProtKB-UniRule"/>
</dbReference>
<dbReference type="GO" id="GO:0009098">
    <property type="term" value="P:L-leucine biosynthetic process"/>
    <property type="evidence" value="ECO:0007669"/>
    <property type="project" value="UniProtKB-UniRule"/>
</dbReference>
<dbReference type="CDD" id="cd01577">
    <property type="entry name" value="IPMI_Swivel"/>
    <property type="match status" value="1"/>
</dbReference>
<dbReference type="FunFam" id="3.20.19.10:FF:000003">
    <property type="entry name" value="3-isopropylmalate dehydratase small subunit"/>
    <property type="match status" value="1"/>
</dbReference>
<dbReference type="Gene3D" id="3.20.19.10">
    <property type="entry name" value="Aconitase, domain 4"/>
    <property type="match status" value="1"/>
</dbReference>
<dbReference type="HAMAP" id="MF_01031">
    <property type="entry name" value="LeuD_type1"/>
    <property type="match status" value="1"/>
</dbReference>
<dbReference type="InterPro" id="IPR004431">
    <property type="entry name" value="3-IsopropMal_deHydase_ssu"/>
</dbReference>
<dbReference type="InterPro" id="IPR015928">
    <property type="entry name" value="Aconitase/3IPM_dehydase_swvl"/>
</dbReference>
<dbReference type="InterPro" id="IPR000573">
    <property type="entry name" value="AconitaseA/IPMdHydase_ssu_swvl"/>
</dbReference>
<dbReference type="InterPro" id="IPR033940">
    <property type="entry name" value="IPMI_Swivel"/>
</dbReference>
<dbReference type="InterPro" id="IPR050075">
    <property type="entry name" value="LeuD"/>
</dbReference>
<dbReference type="NCBIfam" id="TIGR00171">
    <property type="entry name" value="leuD"/>
    <property type="match status" value="1"/>
</dbReference>
<dbReference type="NCBIfam" id="NF002458">
    <property type="entry name" value="PRK01641.1"/>
    <property type="match status" value="1"/>
</dbReference>
<dbReference type="PANTHER" id="PTHR43345:SF5">
    <property type="entry name" value="3-ISOPROPYLMALATE DEHYDRATASE SMALL SUBUNIT"/>
    <property type="match status" value="1"/>
</dbReference>
<dbReference type="PANTHER" id="PTHR43345">
    <property type="entry name" value="3-ISOPROPYLMALATE DEHYDRATASE SMALL SUBUNIT 2-RELATED-RELATED"/>
    <property type="match status" value="1"/>
</dbReference>
<dbReference type="Pfam" id="PF00694">
    <property type="entry name" value="Aconitase_C"/>
    <property type="match status" value="1"/>
</dbReference>
<dbReference type="SUPFAM" id="SSF52016">
    <property type="entry name" value="LeuD/IlvD-like"/>
    <property type="match status" value="1"/>
</dbReference>
<feature type="chain" id="PRO_0000141865" description="3-isopropylmalate dehydratase small subunit">
    <location>
        <begin position="1"/>
        <end position="216"/>
    </location>
</feature>
<comment type="function">
    <text evidence="1">Catalyzes the isomerization between 2-isopropylmalate and 3-isopropylmalate, via the formation of 2-isopropylmaleate.</text>
</comment>
<comment type="catalytic activity">
    <reaction evidence="1">
        <text>(2R,3S)-3-isopropylmalate = (2S)-2-isopropylmalate</text>
        <dbReference type="Rhea" id="RHEA:32287"/>
        <dbReference type="ChEBI" id="CHEBI:1178"/>
        <dbReference type="ChEBI" id="CHEBI:35121"/>
        <dbReference type="EC" id="4.2.1.33"/>
    </reaction>
</comment>
<comment type="pathway">
    <text evidence="1">Amino-acid biosynthesis; L-leucine biosynthesis; L-leucine from 3-methyl-2-oxobutanoate: step 2/4.</text>
</comment>
<comment type="subunit">
    <text evidence="1">Heterodimer of LeuC and LeuD.</text>
</comment>
<comment type="similarity">
    <text evidence="1">Belongs to the LeuD family. LeuD type 1 subfamily.</text>
</comment>
<sequence>MDKFTVHSGLVAPLDRENVDTDAIIPKQFLKSIKRTGFGPNLFDEWRYKDVGEPGMDNSKRPLNPDFVLNQPRYQGASILLARRNFGCGSSREHAPWALSQYGFRAVIAPSFADIFFNNCYKNGLLPVVLSEQQIDHLFNETNAFNGYKLTIDLDKQVVLTPSGQGYEFDIAPFRKYCMLNGFDDIGLTLRHADKIKSYEAERVAKMPWLNNRVVG</sequence>
<reference key="1">
    <citation type="journal article" date="2010" name="PLoS ONE">
        <title>The complete multipartite genome sequence of Cupriavidus necator JMP134, a versatile pollutant degrader.</title>
        <authorList>
            <person name="Lykidis A."/>
            <person name="Perez-Pantoja D."/>
            <person name="Ledger T."/>
            <person name="Mavromatis K."/>
            <person name="Anderson I.J."/>
            <person name="Ivanova N.N."/>
            <person name="Hooper S.D."/>
            <person name="Lapidus A."/>
            <person name="Lucas S."/>
            <person name="Gonzalez B."/>
            <person name="Kyrpides N.C."/>
        </authorList>
    </citation>
    <scope>NUCLEOTIDE SEQUENCE [LARGE SCALE GENOMIC DNA]</scope>
    <source>
        <strain>JMP134 / LMG 1197</strain>
    </source>
</reference>
<gene>
    <name evidence="1" type="primary">leuD</name>
    <name type="ordered locus">Reut_A2312</name>
</gene>
<organism>
    <name type="scientific">Cupriavidus pinatubonensis (strain JMP 134 / LMG 1197)</name>
    <name type="common">Cupriavidus necator (strain JMP 134)</name>
    <dbReference type="NCBI Taxonomy" id="264198"/>
    <lineage>
        <taxon>Bacteria</taxon>
        <taxon>Pseudomonadati</taxon>
        <taxon>Pseudomonadota</taxon>
        <taxon>Betaproteobacteria</taxon>
        <taxon>Burkholderiales</taxon>
        <taxon>Burkholderiaceae</taxon>
        <taxon>Cupriavidus</taxon>
    </lineage>
</organism>
<accession>Q46YV9</accession>
<evidence type="ECO:0000255" key="1">
    <source>
        <dbReference type="HAMAP-Rule" id="MF_01031"/>
    </source>
</evidence>
<proteinExistence type="inferred from homology"/>